<organism>
    <name type="scientific">Enterobacter sp. (strain 638)</name>
    <dbReference type="NCBI Taxonomy" id="399742"/>
    <lineage>
        <taxon>Bacteria</taxon>
        <taxon>Pseudomonadati</taxon>
        <taxon>Pseudomonadota</taxon>
        <taxon>Gammaproteobacteria</taxon>
        <taxon>Enterobacterales</taxon>
        <taxon>Enterobacteriaceae</taxon>
        <taxon>Enterobacter</taxon>
    </lineage>
</organism>
<dbReference type="EC" id="6.3.4.21" evidence="1"/>
<dbReference type="EMBL" id="CP000653">
    <property type="protein sequence ID" value="ABP60130.1"/>
    <property type="molecule type" value="Genomic_DNA"/>
</dbReference>
<dbReference type="RefSeq" id="WP_012016847.1">
    <property type="nucleotide sequence ID" value="NC_009436.1"/>
</dbReference>
<dbReference type="SMR" id="A4W8V0"/>
<dbReference type="STRING" id="399742.Ent638_1450"/>
<dbReference type="KEGG" id="ent:Ent638_1450"/>
<dbReference type="eggNOG" id="COG1488">
    <property type="taxonomic scope" value="Bacteria"/>
</dbReference>
<dbReference type="HOGENOM" id="CLU_030991_1_0_6"/>
<dbReference type="OrthoDB" id="9771406at2"/>
<dbReference type="UniPathway" id="UPA00253">
    <property type="reaction ID" value="UER00457"/>
</dbReference>
<dbReference type="Proteomes" id="UP000000230">
    <property type="component" value="Chromosome"/>
</dbReference>
<dbReference type="GO" id="GO:0005829">
    <property type="term" value="C:cytosol"/>
    <property type="evidence" value="ECO:0007669"/>
    <property type="project" value="TreeGrafter"/>
</dbReference>
<dbReference type="GO" id="GO:0004516">
    <property type="term" value="F:nicotinate phosphoribosyltransferase activity"/>
    <property type="evidence" value="ECO:0007669"/>
    <property type="project" value="UniProtKB-UniRule"/>
</dbReference>
<dbReference type="GO" id="GO:0034355">
    <property type="term" value="P:NAD biosynthetic process via the salvage pathway"/>
    <property type="evidence" value="ECO:0007669"/>
    <property type="project" value="TreeGrafter"/>
</dbReference>
<dbReference type="CDD" id="cd01401">
    <property type="entry name" value="PncB_like"/>
    <property type="match status" value="1"/>
</dbReference>
<dbReference type="FunFam" id="3.20.140.10:FF:000001">
    <property type="entry name" value="Nicotinate phosphoribosyltransferase"/>
    <property type="match status" value="1"/>
</dbReference>
<dbReference type="Gene3D" id="3.20.140.10">
    <property type="entry name" value="nicotinate phosphoribosyltransferase"/>
    <property type="match status" value="1"/>
</dbReference>
<dbReference type="HAMAP" id="MF_00570">
    <property type="entry name" value="NAPRTase"/>
    <property type="match status" value="1"/>
</dbReference>
<dbReference type="InterPro" id="IPR041525">
    <property type="entry name" value="N/Namide_PRibTrfase"/>
</dbReference>
<dbReference type="InterPro" id="IPR040727">
    <property type="entry name" value="NAPRTase_N"/>
</dbReference>
<dbReference type="InterPro" id="IPR006406">
    <property type="entry name" value="Nic_PRibTrfase"/>
</dbReference>
<dbReference type="InterPro" id="IPR007229">
    <property type="entry name" value="Nic_PRibTrfase-Fam"/>
</dbReference>
<dbReference type="InterPro" id="IPR036068">
    <property type="entry name" value="Nicotinate_pribotase-like_C"/>
</dbReference>
<dbReference type="NCBIfam" id="TIGR01514">
    <property type="entry name" value="NAPRTase"/>
    <property type="match status" value="1"/>
</dbReference>
<dbReference type="NCBIfam" id="NF003704">
    <property type="entry name" value="PRK05321.1"/>
    <property type="match status" value="1"/>
</dbReference>
<dbReference type="PANTHER" id="PTHR11098">
    <property type="entry name" value="NICOTINATE PHOSPHORIBOSYLTRANSFERASE"/>
    <property type="match status" value="1"/>
</dbReference>
<dbReference type="PANTHER" id="PTHR11098:SF1">
    <property type="entry name" value="NICOTINATE PHOSPHORIBOSYLTRANSFERASE"/>
    <property type="match status" value="1"/>
</dbReference>
<dbReference type="Pfam" id="PF04095">
    <property type="entry name" value="NAPRTase"/>
    <property type="match status" value="1"/>
</dbReference>
<dbReference type="Pfam" id="PF17767">
    <property type="entry name" value="NAPRTase_N"/>
    <property type="match status" value="1"/>
</dbReference>
<dbReference type="PIRSF" id="PIRSF000484">
    <property type="entry name" value="NAPRT"/>
    <property type="match status" value="1"/>
</dbReference>
<dbReference type="SUPFAM" id="SSF51690">
    <property type="entry name" value="Nicotinate/Quinolinate PRTase C-terminal domain-like"/>
    <property type="match status" value="1"/>
</dbReference>
<dbReference type="SUPFAM" id="SSF54675">
    <property type="entry name" value="Nicotinate/Quinolinate PRTase N-terminal domain-like"/>
    <property type="match status" value="1"/>
</dbReference>
<accession>A4W8V0</accession>
<gene>
    <name evidence="1" type="primary">pncB</name>
    <name type="ordered locus">Ent638_1450</name>
</gene>
<feature type="chain" id="PRO_1000061168" description="Nicotinate phosphoribosyltransferase">
    <location>
        <begin position="1"/>
        <end position="400"/>
    </location>
</feature>
<feature type="modified residue" description="Phosphohistidine; by autocatalysis" evidence="1">
    <location>
        <position position="220"/>
    </location>
</feature>
<reference key="1">
    <citation type="journal article" date="2010" name="PLoS Genet.">
        <title>Genome sequence of the plant growth promoting endophytic bacterium Enterobacter sp. 638.</title>
        <authorList>
            <person name="Taghavi S."/>
            <person name="van der Lelie D."/>
            <person name="Hoffman A."/>
            <person name="Zhang Y.B."/>
            <person name="Walla M.D."/>
            <person name="Vangronsveld J."/>
            <person name="Newman L."/>
            <person name="Monchy S."/>
        </authorList>
    </citation>
    <scope>NUCLEOTIDE SEQUENCE [LARGE SCALE GENOMIC DNA]</scope>
    <source>
        <strain>638</strain>
    </source>
</reference>
<comment type="function">
    <text evidence="1">Catalyzes the synthesis of beta-nicotinate D-ribonucleotide from nicotinate and 5-phospho-D-ribose 1-phosphate at the expense of ATP.</text>
</comment>
<comment type="catalytic activity">
    <reaction evidence="1">
        <text>nicotinate + 5-phospho-alpha-D-ribose 1-diphosphate + ATP + H2O = nicotinate beta-D-ribonucleotide + ADP + phosphate + diphosphate</text>
        <dbReference type="Rhea" id="RHEA:36163"/>
        <dbReference type="ChEBI" id="CHEBI:15377"/>
        <dbReference type="ChEBI" id="CHEBI:30616"/>
        <dbReference type="ChEBI" id="CHEBI:32544"/>
        <dbReference type="ChEBI" id="CHEBI:33019"/>
        <dbReference type="ChEBI" id="CHEBI:43474"/>
        <dbReference type="ChEBI" id="CHEBI:57502"/>
        <dbReference type="ChEBI" id="CHEBI:58017"/>
        <dbReference type="ChEBI" id="CHEBI:456216"/>
        <dbReference type="EC" id="6.3.4.21"/>
    </reaction>
</comment>
<comment type="pathway">
    <text evidence="1">Cofactor biosynthesis; NAD(+) biosynthesis; nicotinate D-ribonucleotide from nicotinate: step 1/1.</text>
</comment>
<comment type="PTM">
    <text evidence="1">Transiently phosphorylated on a His residue during the reaction cycle. Phosphorylation strongly increases the affinity for substrates and increases the rate of nicotinate D-ribonucleotide production. Dephosphorylation regenerates the low-affinity form of the enzyme, leading to product release.</text>
</comment>
<comment type="similarity">
    <text evidence="1">Belongs to the NAPRTase family.</text>
</comment>
<keyword id="KW-0436">Ligase</keyword>
<keyword id="KW-0597">Phosphoprotein</keyword>
<keyword id="KW-0662">Pyridine nucleotide biosynthesis</keyword>
<name>PNCB_ENT38</name>
<sequence length="400" mass="45932">MTQFASPVLHTLLDTDAYKLHMQQAVFHHYYDVQVAAEFRCRGDDLLGIYADSIREQVDAMQHLALQDDEYQWLSGLPFFKADYLDWLRDFRFNPEQVTITNDNGKLNIRLAGPWREVIMWEVPLLAVISEIVHRYRSPEMGVEHALATLESKLGEFAQMTESVDMSRFRLMDFGTRRRFSREVQQAIVKRLQQEPWFVGTSNYDLARRRNLTPMGTQAHEWFQAHQQISPDLATSQRAALAAWLEEYPDQLGIALTDCITMDAFLRDFGPEFAQRYQGLRHDSGDPVEWGEKAIAHYKKLGIDPLTKVLVFSDNLDLSKALELYRHFSARVNLSFGIGTRLTCDIPQVKPLNIVIKLVECNGKPVAKLSDSPGKTICHDKAFVRALRKAFDLPQIKKAS</sequence>
<protein>
    <recommendedName>
        <fullName evidence="1">Nicotinate phosphoribosyltransferase</fullName>
        <shortName evidence="1">NAPRTase</shortName>
        <ecNumber evidence="1">6.3.4.21</ecNumber>
    </recommendedName>
</protein>
<proteinExistence type="inferred from homology"/>
<evidence type="ECO:0000255" key="1">
    <source>
        <dbReference type="HAMAP-Rule" id="MF_00570"/>
    </source>
</evidence>